<accession>B2IKV4</accession>
<proteinExistence type="inferred from homology"/>
<keyword id="KW-0028">Amino-acid biosynthesis</keyword>
<keyword id="KW-0057">Aromatic amino acid biosynthesis</keyword>
<keyword id="KW-0413">Isomerase</keyword>
<keyword id="KW-1185">Reference proteome</keyword>
<keyword id="KW-0822">Tryptophan biosynthesis</keyword>
<organism>
    <name type="scientific">Beijerinckia indica subsp. indica (strain ATCC 9039 / DSM 1715 / NCIMB 8712)</name>
    <dbReference type="NCBI Taxonomy" id="395963"/>
    <lineage>
        <taxon>Bacteria</taxon>
        <taxon>Pseudomonadati</taxon>
        <taxon>Pseudomonadota</taxon>
        <taxon>Alphaproteobacteria</taxon>
        <taxon>Hyphomicrobiales</taxon>
        <taxon>Beijerinckiaceae</taxon>
        <taxon>Beijerinckia</taxon>
    </lineage>
</organism>
<dbReference type="EC" id="5.3.1.24" evidence="1"/>
<dbReference type="EMBL" id="CP001016">
    <property type="protein sequence ID" value="ACB96494.1"/>
    <property type="molecule type" value="Genomic_DNA"/>
</dbReference>
<dbReference type="RefSeq" id="WP_012385845.1">
    <property type="nucleotide sequence ID" value="NC_010581.1"/>
</dbReference>
<dbReference type="SMR" id="B2IKV4"/>
<dbReference type="STRING" id="395963.Bind_2926"/>
<dbReference type="KEGG" id="bid:Bind_2926"/>
<dbReference type="eggNOG" id="COG0135">
    <property type="taxonomic scope" value="Bacteria"/>
</dbReference>
<dbReference type="HOGENOM" id="CLU_076364_1_1_5"/>
<dbReference type="OrthoDB" id="9796196at2"/>
<dbReference type="UniPathway" id="UPA00035">
    <property type="reaction ID" value="UER00042"/>
</dbReference>
<dbReference type="Proteomes" id="UP000001695">
    <property type="component" value="Chromosome"/>
</dbReference>
<dbReference type="GO" id="GO:0004640">
    <property type="term" value="F:phosphoribosylanthranilate isomerase activity"/>
    <property type="evidence" value="ECO:0007669"/>
    <property type="project" value="UniProtKB-UniRule"/>
</dbReference>
<dbReference type="GO" id="GO:0000162">
    <property type="term" value="P:L-tryptophan biosynthetic process"/>
    <property type="evidence" value="ECO:0007669"/>
    <property type="project" value="UniProtKB-UniRule"/>
</dbReference>
<dbReference type="CDD" id="cd00405">
    <property type="entry name" value="PRAI"/>
    <property type="match status" value="1"/>
</dbReference>
<dbReference type="Gene3D" id="3.20.20.70">
    <property type="entry name" value="Aldolase class I"/>
    <property type="match status" value="1"/>
</dbReference>
<dbReference type="HAMAP" id="MF_00135">
    <property type="entry name" value="PRAI"/>
    <property type="match status" value="1"/>
</dbReference>
<dbReference type="InterPro" id="IPR013785">
    <property type="entry name" value="Aldolase_TIM"/>
</dbReference>
<dbReference type="InterPro" id="IPR001240">
    <property type="entry name" value="PRAI_dom"/>
</dbReference>
<dbReference type="InterPro" id="IPR011060">
    <property type="entry name" value="RibuloseP-bd_barrel"/>
</dbReference>
<dbReference type="InterPro" id="IPR044643">
    <property type="entry name" value="TrpF_fam"/>
</dbReference>
<dbReference type="NCBIfam" id="NF002295">
    <property type="entry name" value="PRK01222.1-1"/>
    <property type="match status" value="1"/>
</dbReference>
<dbReference type="PANTHER" id="PTHR42894">
    <property type="entry name" value="N-(5'-PHOSPHORIBOSYL)ANTHRANILATE ISOMERASE"/>
    <property type="match status" value="1"/>
</dbReference>
<dbReference type="PANTHER" id="PTHR42894:SF1">
    <property type="entry name" value="N-(5'-PHOSPHORIBOSYL)ANTHRANILATE ISOMERASE"/>
    <property type="match status" value="1"/>
</dbReference>
<dbReference type="Pfam" id="PF00697">
    <property type="entry name" value="PRAI"/>
    <property type="match status" value="1"/>
</dbReference>
<dbReference type="SUPFAM" id="SSF51366">
    <property type="entry name" value="Ribulose-phoshate binding barrel"/>
    <property type="match status" value="1"/>
</dbReference>
<evidence type="ECO:0000255" key="1">
    <source>
        <dbReference type="HAMAP-Rule" id="MF_00135"/>
    </source>
</evidence>
<feature type="chain" id="PRO_1000095912" description="N-(5'-phosphoribosyl)anthranilate isomerase">
    <location>
        <begin position="1"/>
        <end position="222"/>
    </location>
</feature>
<comment type="catalytic activity">
    <reaction evidence="1">
        <text>N-(5-phospho-beta-D-ribosyl)anthranilate = 1-(2-carboxyphenylamino)-1-deoxy-D-ribulose 5-phosphate</text>
        <dbReference type="Rhea" id="RHEA:21540"/>
        <dbReference type="ChEBI" id="CHEBI:18277"/>
        <dbReference type="ChEBI" id="CHEBI:58613"/>
        <dbReference type="EC" id="5.3.1.24"/>
    </reaction>
</comment>
<comment type="pathway">
    <text evidence="1">Amino-acid biosynthesis; L-tryptophan biosynthesis; L-tryptophan from chorismate: step 3/5.</text>
</comment>
<comment type="similarity">
    <text evidence="1">Belongs to the TrpF family.</text>
</comment>
<reference key="1">
    <citation type="journal article" date="2010" name="J. Bacteriol.">
        <title>Complete genome sequence of Beijerinckia indica subsp. indica.</title>
        <authorList>
            <person name="Tamas I."/>
            <person name="Dedysh S.N."/>
            <person name="Liesack W."/>
            <person name="Stott M.B."/>
            <person name="Alam M."/>
            <person name="Murrell J.C."/>
            <person name="Dunfield P.F."/>
        </authorList>
    </citation>
    <scope>NUCLEOTIDE SEQUENCE [LARGE SCALE GENOMIC DNA]</scope>
    <source>
        <strain>ATCC 9039 / DSM 1715 / NCIMB 8712</strain>
    </source>
</reference>
<gene>
    <name evidence="1" type="primary">trpF</name>
    <name type="ordered locus">Bind_2926</name>
</gene>
<protein>
    <recommendedName>
        <fullName evidence="1">N-(5'-phosphoribosyl)anthranilate isomerase</fullName>
        <shortName evidence="1">PRAI</shortName>
        <ecNumber evidence="1">5.3.1.24</ecNumber>
    </recommendedName>
</protein>
<name>TRPF_BEII9</name>
<sequence>MPIMIKICGLRTEETLDAALDLGADMVGFVSFSKSPRHVSLDLASHLGKRVGDRALKVLLTVNADDASLAAGIAALDPQMLQVHGRETPERIASIRARFGLPVMKAISIGDYSDLVQIPLFDAVADLLLFDAKPKAPGGLPGGNGTAFDWSLLRHVETRKPWLLAGGLTSQNVAGAIAATNAQGVDVSSGVESAAGVKDLAKMAAFIEAARKPQLSSQRHLS</sequence>